<protein>
    <recommendedName>
        <fullName evidence="1">ATP-dependent Clp protease proteolytic subunit</fullName>
        <ecNumber evidence="1">3.4.21.92</ecNumber>
    </recommendedName>
    <alternativeName>
        <fullName evidence="1">Endopeptidase Clp</fullName>
    </alternativeName>
</protein>
<evidence type="ECO:0000255" key="1">
    <source>
        <dbReference type="HAMAP-Rule" id="MF_00444"/>
    </source>
</evidence>
<gene>
    <name evidence="1" type="primary">clpP</name>
</gene>
<organism>
    <name type="scientific">Crucihimalaya wallichii</name>
    <name type="common">Rock-cress</name>
    <name type="synonym">Arabidopsis campestris</name>
    <dbReference type="NCBI Taxonomy" id="78192"/>
    <lineage>
        <taxon>Eukaryota</taxon>
        <taxon>Viridiplantae</taxon>
        <taxon>Streptophyta</taxon>
        <taxon>Embryophyta</taxon>
        <taxon>Tracheophyta</taxon>
        <taxon>Spermatophyta</taxon>
        <taxon>Magnoliopsida</taxon>
        <taxon>eudicotyledons</taxon>
        <taxon>Gunneridae</taxon>
        <taxon>Pentapetalae</taxon>
        <taxon>rosids</taxon>
        <taxon>malvids</taxon>
        <taxon>Brassicales</taxon>
        <taxon>Brassicaceae</taxon>
        <taxon>Crucihimalayeae</taxon>
        <taxon>Crucihimalaya</taxon>
    </lineage>
</organism>
<keyword id="KW-0150">Chloroplast</keyword>
<keyword id="KW-0378">Hydrolase</keyword>
<keyword id="KW-0934">Plastid</keyword>
<keyword id="KW-0645">Protease</keyword>
<keyword id="KW-0720">Serine protease</keyword>
<comment type="function">
    <text evidence="1">Cleaves peptides in various proteins in a process that requires ATP hydrolysis. Has a chymotrypsin-like activity. Plays a major role in the degradation of misfolded proteins.</text>
</comment>
<comment type="catalytic activity">
    <reaction evidence="1">
        <text>Hydrolysis of proteins to small peptides in the presence of ATP and magnesium. alpha-casein is the usual test substrate. In the absence of ATP, only oligopeptides shorter than five residues are hydrolyzed (such as succinyl-Leu-Tyr-|-NHMec, and Leu-Tyr-Leu-|-Tyr-Trp, in which cleavage of the -Tyr-|-Leu- and -Tyr-|-Trp bonds also occurs).</text>
        <dbReference type="EC" id="3.4.21.92"/>
    </reaction>
</comment>
<comment type="subunit">
    <text>Component of the chloroplastic Clp protease core complex.</text>
</comment>
<comment type="subcellular location">
    <subcellularLocation>
        <location evidence="1">Plastid</location>
        <location evidence="1">Chloroplast stroma</location>
    </subcellularLocation>
</comment>
<comment type="similarity">
    <text evidence="1">Belongs to the peptidase S14 family.</text>
</comment>
<dbReference type="EC" id="3.4.21.92" evidence="1"/>
<dbReference type="EMBL" id="AP009372">
    <property type="protein sequence ID" value="BAF50311.1"/>
    <property type="molecule type" value="Genomic_DNA"/>
</dbReference>
<dbReference type="RefSeq" id="YP_001123487.1">
    <property type="nucleotide sequence ID" value="NC_009271.1"/>
</dbReference>
<dbReference type="SMR" id="A4QKV6"/>
<dbReference type="GeneID" id="4962681"/>
<dbReference type="GO" id="GO:0009570">
    <property type="term" value="C:chloroplast stroma"/>
    <property type="evidence" value="ECO:0007669"/>
    <property type="project" value="UniProtKB-SubCell"/>
</dbReference>
<dbReference type="GO" id="GO:0009368">
    <property type="term" value="C:endopeptidase Clp complex"/>
    <property type="evidence" value="ECO:0007669"/>
    <property type="project" value="TreeGrafter"/>
</dbReference>
<dbReference type="GO" id="GO:0004176">
    <property type="term" value="F:ATP-dependent peptidase activity"/>
    <property type="evidence" value="ECO:0007669"/>
    <property type="project" value="InterPro"/>
</dbReference>
<dbReference type="GO" id="GO:0051117">
    <property type="term" value="F:ATPase binding"/>
    <property type="evidence" value="ECO:0007669"/>
    <property type="project" value="TreeGrafter"/>
</dbReference>
<dbReference type="GO" id="GO:0004252">
    <property type="term" value="F:serine-type endopeptidase activity"/>
    <property type="evidence" value="ECO:0007669"/>
    <property type="project" value="UniProtKB-UniRule"/>
</dbReference>
<dbReference type="GO" id="GO:0006515">
    <property type="term" value="P:protein quality control for misfolded or incompletely synthesized proteins"/>
    <property type="evidence" value="ECO:0007669"/>
    <property type="project" value="TreeGrafter"/>
</dbReference>
<dbReference type="CDD" id="cd07017">
    <property type="entry name" value="S14_ClpP_2"/>
    <property type="match status" value="1"/>
</dbReference>
<dbReference type="FunFam" id="3.90.226.10:FF:000006">
    <property type="entry name" value="ATP-dependent Clp protease proteolytic subunit"/>
    <property type="match status" value="1"/>
</dbReference>
<dbReference type="Gene3D" id="3.90.226.10">
    <property type="entry name" value="2-enoyl-CoA Hydratase, Chain A, domain 1"/>
    <property type="match status" value="1"/>
</dbReference>
<dbReference type="HAMAP" id="MF_00444">
    <property type="entry name" value="ClpP"/>
    <property type="match status" value="1"/>
</dbReference>
<dbReference type="InterPro" id="IPR001907">
    <property type="entry name" value="ClpP"/>
</dbReference>
<dbReference type="InterPro" id="IPR029045">
    <property type="entry name" value="ClpP/crotonase-like_dom_sf"/>
</dbReference>
<dbReference type="InterPro" id="IPR023562">
    <property type="entry name" value="ClpP/TepA"/>
</dbReference>
<dbReference type="InterPro" id="IPR033135">
    <property type="entry name" value="ClpP_His_AS"/>
</dbReference>
<dbReference type="PANTHER" id="PTHR10381">
    <property type="entry name" value="ATP-DEPENDENT CLP PROTEASE PROTEOLYTIC SUBUNIT"/>
    <property type="match status" value="1"/>
</dbReference>
<dbReference type="PANTHER" id="PTHR10381:SF15">
    <property type="entry name" value="CHLOROPLASTIC ATP-DEPENDENT CLP PROTEASE PROTEOLYTIC SUBUNIT 1"/>
    <property type="match status" value="1"/>
</dbReference>
<dbReference type="Pfam" id="PF00574">
    <property type="entry name" value="CLP_protease"/>
    <property type="match status" value="1"/>
</dbReference>
<dbReference type="PRINTS" id="PR00127">
    <property type="entry name" value="CLPPROTEASEP"/>
</dbReference>
<dbReference type="SUPFAM" id="SSF52096">
    <property type="entry name" value="ClpP/crotonase"/>
    <property type="match status" value="1"/>
</dbReference>
<dbReference type="PROSITE" id="PS00382">
    <property type="entry name" value="CLP_PROTEASE_HIS"/>
    <property type="match status" value="1"/>
</dbReference>
<geneLocation type="chloroplast"/>
<proteinExistence type="inferred from homology"/>
<accession>A4QKV6</accession>
<sequence>MPIGVPKVPFRSPGEGDTSWVDIYNRLYRERLFFLGQEVDTEISNQLISLMIYLSIEKDTKDLYLFINSPGGWVISGMAIYDTMQFVRPDVQTICMGLAASIASFILVGGAITKRIAFPHARVMIHQPASSFYEAQTGEFILEAEELLKLRETITRVYVQRTGKPIWVVSEDMERDVFMSATEAQAHGIVDLVAVQ</sequence>
<reference key="1">
    <citation type="submission" date="2007-03" db="EMBL/GenBank/DDBJ databases">
        <title>Sequencing analysis of Crucihimalaya wallichii chloroplast DNA.</title>
        <authorList>
            <person name="Hosouchi T."/>
            <person name="Tsuruoka H."/>
            <person name="Kotani H."/>
        </authorList>
    </citation>
    <scope>NUCLEOTIDE SEQUENCE [LARGE SCALE GENOMIC DNA]</scope>
    <source>
        <strain>JS5</strain>
    </source>
</reference>
<feature type="chain" id="PRO_0000309295" description="ATP-dependent Clp protease proteolytic subunit">
    <location>
        <begin position="1"/>
        <end position="196"/>
    </location>
</feature>
<feature type="active site" description="Nucleophile" evidence="1">
    <location>
        <position position="101"/>
    </location>
</feature>
<feature type="active site" evidence="1">
    <location>
        <position position="126"/>
    </location>
</feature>
<name>CLPP_CRUWA</name>